<keyword id="KW-1185">Reference proteome</keyword>
<evidence type="ECO:0000256" key="1">
    <source>
        <dbReference type="SAM" id="MobiDB-lite"/>
    </source>
</evidence>
<evidence type="ECO:0000305" key="2"/>
<accession>Q8CF36</accession>
<reference key="1">
    <citation type="journal article" date="2005" name="Science">
        <title>The transcriptional landscape of the mammalian genome.</title>
        <authorList>
            <person name="Carninci P."/>
            <person name="Kasukawa T."/>
            <person name="Katayama S."/>
            <person name="Gough J."/>
            <person name="Frith M.C."/>
            <person name="Maeda N."/>
            <person name="Oyama R."/>
            <person name="Ravasi T."/>
            <person name="Lenhard B."/>
            <person name="Wells C."/>
            <person name="Kodzius R."/>
            <person name="Shimokawa K."/>
            <person name="Bajic V.B."/>
            <person name="Brenner S.E."/>
            <person name="Batalov S."/>
            <person name="Forrest A.R."/>
            <person name="Zavolan M."/>
            <person name="Davis M.J."/>
            <person name="Wilming L.G."/>
            <person name="Aidinis V."/>
            <person name="Allen J.E."/>
            <person name="Ambesi-Impiombato A."/>
            <person name="Apweiler R."/>
            <person name="Aturaliya R.N."/>
            <person name="Bailey T.L."/>
            <person name="Bansal M."/>
            <person name="Baxter L."/>
            <person name="Beisel K.W."/>
            <person name="Bersano T."/>
            <person name="Bono H."/>
            <person name="Chalk A.M."/>
            <person name="Chiu K.P."/>
            <person name="Choudhary V."/>
            <person name="Christoffels A."/>
            <person name="Clutterbuck D.R."/>
            <person name="Crowe M.L."/>
            <person name="Dalla E."/>
            <person name="Dalrymple B.P."/>
            <person name="de Bono B."/>
            <person name="Della Gatta G."/>
            <person name="di Bernardo D."/>
            <person name="Down T."/>
            <person name="Engstrom P."/>
            <person name="Fagiolini M."/>
            <person name="Faulkner G."/>
            <person name="Fletcher C.F."/>
            <person name="Fukushima T."/>
            <person name="Furuno M."/>
            <person name="Futaki S."/>
            <person name="Gariboldi M."/>
            <person name="Georgii-Hemming P."/>
            <person name="Gingeras T.R."/>
            <person name="Gojobori T."/>
            <person name="Green R.E."/>
            <person name="Gustincich S."/>
            <person name="Harbers M."/>
            <person name="Hayashi Y."/>
            <person name="Hensch T.K."/>
            <person name="Hirokawa N."/>
            <person name="Hill D."/>
            <person name="Huminiecki L."/>
            <person name="Iacono M."/>
            <person name="Ikeo K."/>
            <person name="Iwama A."/>
            <person name="Ishikawa T."/>
            <person name="Jakt M."/>
            <person name="Kanapin A."/>
            <person name="Katoh M."/>
            <person name="Kawasawa Y."/>
            <person name="Kelso J."/>
            <person name="Kitamura H."/>
            <person name="Kitano H."/>
            <person name="Kollias G."/>
            <person name="Krishnan S.P."/>
            <person name="Kruger A."/>
            <person name="Kummerfeld S.K."/>
            <person name="Kurochkin I.V."/>
            <person name="Lareau L.F."/>
            <person name="Lazarevic D."/>
            <person name="Lipovich L."/>
            <person name="Liu J."/>
            <person name="Liuni S."/>
            <person name="McWilliam S."/>
            <person name="Madan Babu M."/>
            <person name="Madera M."/>
            <person name="Marchionni L."/>
            <person name="Matsuda H."/>
            <person name="Matsuzawa S."/>
            <person name="Miki H."/>
            <person name="Mignone F."/>
            <person name="Miyake S."/>
            <person name="Morris K."/>
            <person name="Mottagui-Tabar S."/>
            <person name="Mulder N."/>
            <person name="Nakano N."/>
            <person name="Nakauchi H."/>
            <person name="Ng P."/>
            <person name="Nilsson R."/>
            <person name="Nishiguchi S."/>
            <person name="Nishikawa S."/>
            <person name="Nori F."/>
            <person name="Ohara O."/>
            <person name="Okazaki Y."/>
            <person name="Orlando V."/>
            <person name="Pang K.C."/>
            <person name="Pavan W.J."/>
            <person name="Pavesi G."/>
            <person name="Pesole G."/>
            <person name="Petrovsky N."/>
            <person name="Piazza S."/>
            <person name="Reed J."/>
            <person name="Reid J.F."/>
            <person name="Ring B.Z."/>
            <person name="Ringwald M."/>
            <person name="Rost B."/>
            <person name="Ruan Y."/>
            <person name="Salzberg S.L."/>
            <person name="Sandelin A."/>
            <person name="Schneider C."/>
            <person name="Schoenbach C."/>
            <person name="Sekiguchi K."/>
            <person name="Semple C.A."/>
            <person name="Seno S."/>
            <person name="Sessa L."/>
            <person name="Sheng Y."/>
            <person name="Shibata Y."/>
            <person name="Shimada H."/>
            <person name="Shimada K."/>
            <person name="Silva D."/>
            <person name="Sinclair B."/>
            <person name="Sperling S."/>
            <person name="Stupka E."/>
            <person name="Sugiura K."/>
            <person name="Sultana R."/>
            <person name="Takenaka Y."/>
            <person name="Taki K."/>
            <person name="Tammoja K."/>
            <person name="Tan S.L."/>
            <person name="Tang S."/>
            <person name="Taylor M.S."/>
            <person name="Tegner J."/>
            <person name="Teichmann S.A."/>
            <person name="Ueda H.R."/>
            <person name="van Nimwegen E."/>
            <person name="Verardo R."/>
            <person name="Wei C.L."/>
            <person name="Yagi K."/>
            <person name="Yamanishi H."/>
            <person name="Zabarovsky E."/>
            <person name="Zhu S."/>
            <person name="Zimmer A."/>
            <person name="Hide W."/>
            <person name="Bult C."/>
            <person name="Grimmond S.M."/>
            <person name="Teasdale R.D."/>
            <person name="Liu E.T."/>
            <person name="Brusic V."/>
            <person name="Quackenbush J."/>
            <person name="Wahlestedt C."/>
            <person name="Mattick J.S."/>
            <person name="Hume D.A."/>
            <person name="Kai C."/>
            <person name="Sasaki D."/>
            <person name="Tomaru Y."/>
            <person name="Fukuda S."/>
            <person name="Kanamori-Katayama M."/>
            <person name="Suzuki M."/>
            <person name="Aoki J."/>
            <person name="Arakawa T."/>
            <person name="Iida J."/>
            <person name="Imamura K."/>
            <person name="Itoh M."/>
            <person name="Kato T."/>
            <person name="Kawaji H."/>
            <person name="Kawagashira N."/>
            <person name="Kawashima T."/>
            <person name="Kojima M."/>
            <person name="Kondo S."/>
            <person name="Konno H."/>
            <person name="Nakano K."/>
            <person name="Ninomiya N."/>
            <person name="Nishio T."/>
            <person name="Okada M."/>
            <person name="Plessy C."/>
            <person name="Shibata K."/>
            <person name="Shiraki T."/>
            <person name="Suzuki S."/>
            <person name="Tagami M."/>
            <person name="Waki K."/>
            <person name="Watahiki A."/>
            <person name="Okamura-Oho Y."/>
            <person name="Suzuki H."/>
            <person name="Kawai J."/>
            <person name="Hayashizaki Y."/>
        </authorList>
    </citation>
    <scope>NUCLEOTIDE SEQUENCE [LARGE SCALE MRNA]</scope>
    <source>
        <strain>C57BL/6J</strain>
        <tissue>Testis</tissue>
    </source>
</reference>
<proteinExistence type="inferred from homology"/>
<name>F229B_MOUSE</name>
<feature type="chain" id="PRO_0000335818" description="Protein FAM229B">
    <location>
        <begin position="1"/>
        <end position="80"/>
    </location>
</feature>
<feature type="region of interest" description="Disordered" evidence="1">
    <location>
        <begin position="1"/>
        <end position="45"/>
    </location>
</feature>
<feature type="compositionally biased region" description="Low complexity" evidence="1">
    <location>
        <begin position="15"/>
        <end position="32"/>
    </location>
</feature>
<feature type="compositionally biased region" description="Polar residues" evidence="1">
    <location>
        <begin position="33"/>
        <end position="42"/>
    </location>
</feature>
<gene>
    <name type="primary">Fam229b</name>
</gene>
<comment type="similarity">
    <text evidence="2">Belongs to the FAM229 family.</text>
</comment>
<sequence length="80" mass="8765">MPFRFGTQPRRFPVEGGDSSIELESGLSSSASCTGKETSPNRQLRRCPGSHCLTITDVPITVYATMRKPPAQSSKEMHPK</sequence>
<protein>
    <recommendedName>
        <fullName>Protein FAM229B</fullName>
    </recommendedName>
</protein>
<dbReference type="EMBL" id="AK006353">
    <property type="protein sequence ID" value="BAC25140.1"/>
    <property type="molecule type" value="mRNA"/>
</dbReference>
<dbReference type="CCDS" id="CCDS23786.1"/>
<dbReference type="RefSeq" id="NP_001346369.1">
    <property type="nucleotide sequence ID" value="NM_001359440.1"/>
</dbReference>
<dbReference type="RefSeq" id="NP_001346370.1">
    <property type="nucleotide sequence ID" value="NM_001359441.1"/>
</dbReference>
<dbReference type="RefSeq" id="NP_001346371.1">
    <property type="nucleotide sequence ID" value="NM_001359442.1"/>
</dbReference>
<dbReference type="RefSeq" id="NP_001346372.1">
    <property type="nucleotide sequence ID" value="NM_001359443.1"/>
</dbReference>
<dbReference type="RefSeq" id="NP_899077.1">
    <property type="nucleotide sequence ID" value="NM_183254.2"/>
</dbReference>
<dbReference type="RefSeq" id="XP_006512878.1">
    <property type="nucleotide sequence ID" value="XM_006512815.1"/>
</dbReference>
<dbReference type="RefSeq" id="XP_006512879.1">
    <property type="nucleotide sequence ID" value="XM_006512816.3"/>
</dbReference>
<dbReference type="RefSeq" id="XP_011241497.1">
    <property type="nucleotide sequence ID" value="XM_011243195.1"/>
</dbReference>
<dbReference type="RefSeq" id="XP_036011850.1">
    <property type="nucleotide sequence ID" value="XM_036155957.1"/>
</dbReference>
<dbReference type="FunCoup" id="Q8CF36">
    <property type="interactions" value="14"/>
</dbReference>
<dbReference type="STRING" id="10090.ENSMUSP00000063508"/>
<dbReference type="PhosphoSitePlus" id="Q8CF36"/>
<dbReference type="PaxDb" id="10090-ENSMUSP00000063508"/>
<dbReference type="ProteomicsDB" id="271835"/>
<dbReference type="Antibodypedia" id="50601">
    <property type="antibodies" value="33 antibodies from 5 providers"/>
</dbReference>
<dbReference type="DNASU" id="66337"/>
<dbReference type="Ensembl" id="ENSMUST00000063204.9">
    <property type="protein sequence ID" value="ENSMUSP00000063508.3"/>
    <property type="gene ID" value="ENSMUSG00000051736.9"/>
</dbReference>
<dbReference type="Ensembl" id="ENSMUST00000124941.8">
    <property type="protein sequence ID" value="ENSMUSP00000123540.2"/>
    <property type="gene ID" value="ENSMUSG00000051736.9"/>
</dbReference>
<dbReference type="Ensembl" id="ENSMUST00000134279.8">
    <property type="protein sequence ID" value="ENSMUSP00000118858.2"/>
    <property type="gene ID" value="ENSMUSG00000051736.9"/>
</dbReference>
<dbReference type="Ensembl" id="ENSMUST00000135785.8">
    <property type="protein sequence ID" value="ENSMUSP00000118928.2"/>
    <property type="gene ID" value="ENSMUSG00000051736.9"/>
</dbReference>
<dbReference type="Ensembl" id="ENSMUST00000136546.8">
    <property type="protein sequence ID" value="ENSMUSP00000121597.2"/>
    <property type="gene ID" value="ENSMUSG00000051736.9"/>
</dbReference>
<dbReference type="Ensembl" id="ENSMUST00000137132.8">
    <property type="protein sequence ID" value="ENSMUSP00000119802.2"/>
    <property type="gene ID" value="ENSMUSG00000051736.9"/>
</dbReference>
<dbReference type="Ensembl" id="ENSMUST00000139743.8">
    <property type="protein sequence ID" value="ENSMUSP00000118545.2"/>
    <property type="gene ID" value="ENSMUSG00000051736.9"/>
</dbReference>
<dbReference type="Ensembl" id="ENSMUST00000149949.8">
    <property type="protein sequence ID" value="ENSMUSP00000121946.2"/>
    <property type="gene ID" value="ENSMUSG00000051736.9"/>
</dbReference>
<dbReference type="GeneID" id="66337"/>
<dbReference type="KEGG" id="mmu:66337"/>
<dbReference type="UCSC" id="uc007evr.1">
    <property type="organism name" value="mouse"/>
</dbReference>
<dbReference type="AGR" id="MGI:1913587"/>
<dbReference type="CTD" id="619208"/>
<dbReference type="MGI" id="MGI:1913587">
    <property type="gene designation" value="Fam229b"/>
</dbReference>
<dbReference type="VEuPathDB" id="HostDB:ENSMUSG00000051736"/>
<dbReference type="eggNOG" id="ENOG502TEG8">
    <property type="taxonomic scope" value="Eukaryota"/>
</dbReference>
<dbReference type="GeneTree" id="ENSGT00390000017996"/>
<dbReference type="HOGENOM" id="CLU_2589122_0_0_1"/>
<dbReference type="InParanoid" id="Q8CF36"/>
<dbReference type="OMA" id="ACNGKET"/>
<dbReference type="OrthoDB" id="9818842at2759"/>
<dbReference type="PhylomeDB" id="Q8CF36"/>
<dbReference type="TreeFam" id="TF339579"/>
<dbReference type="BioGRID-ORCS" id="66337">
    <property type="hits" value="0 hits in 61 CRISPR screens"/>
</dbReference>
<dbReference type="ChiTaRS" id="Fam229b">
    <property type="organism name" value="mouse"/>
</dbReference>
<dbReference type="PRO" id="PR:Q8CF36"/>
<dbReference type="Proteomes" id="UP000000589">
    <property type="component" value="Chromosome 10"/>
</dbReference>
<dbReference type="RNAct" id="Q8CF36">
    <property type="molecule type" value="protein"/>
</dbReference>
<dbReference type="Bgee" id="ENSMUSG00000051736">
    <property type="expression patterns" value="Expressed in seminiferous tubule of testis and 187 other cell types or tissues"/>
</dbReference>
<dbReference type="ExpressionAtlas" id="Q8CF36">
    <property type="expression patterns" value="baseline and differential"/>
</dbReference>
<dbReference type="InterPro" id="IPR028025">
    <property type="entry name" value="FAM229"/>
</dbReference>
<dbReference type="PANTHER" id="PTHR35355">
    <property type="entry name" value="PROTEIN FAM229A"/>
    <property type="match status" value="1"/>
</dbReference>
<dbReference type="PANTHER" id="PTHR35355:SF2">
    <property type="entry name" value="PROTEIN FAM229B"/>
    <property type="match status" value="1"/>
</dbReference>
<dbReference type="Pfam" id="PF14982">
    <property type="entry name" value="UPF0731"/>
    <property type="match status" value="1"/>
</dbReference>
<organism>
    <name type="scientific">Mus musculus</name>
    <name type="common">Mouse</name>
    <dbReference type="NCBI Taxonomy" id="10090"/>
    <lineage>
        <taxon>Eukaryota</taxon>
        <taxon>Metazoa</taxon>
        <taxon>Chordata</taxon>
        <taxon>Craniata</taxon>
        <taxon>Vertebrata</taxon>
        <taxon>Euteleostomi</taxon>
        <taxon>Mammalia</taxon>
        <taxon>Eutheria</taxon>
        <taxon>Euarchontoglires</taxon>
        <taxon>Glires</taxon>
        <taxon>Rodentia</taxon>
        <taxon>Myomorpha</taxon>
        <taxon>Muroidea</taxon>
        <taxon>Muridae</taxon>
        <taxon>Murinae</taxon>
        <taxon>Mus</taxon>
        <taxon>Mus</taxon>
    </lineage>
</organism>